<keyword id="KW-0067">ATP-binding</keyword>
<keyword id="KW-0342">GTP-binding</keyword>
<keyword id="KW-0547">Nucleotide-binding</keyword>
<evidence type="ECO:0000255" key="1">
    <source>
        <dbReference type="HAMAP-Rule" id="MF_00636"/>
    </source>
</evidence>
<feature type="chain" id="PRO_1000130787" description="Nucleotide-binding protein SPG_1492">
    <location>
        <begin position="1"/>
        <end position="296"/>
    </location>
</feature>
<feature type="binding site" evidence="1">
    <location>
        <begin position="13"/>
        <end position="20"/>
    </location>
    <ligand>
        <name>ATP</name>
        <dbReference type="ChEBI" id="CHEBI:30616"/>
    </ligand>
</feature>
<feature type="binding site" evidence="1">
    <location>
        <begin position="63"/>
        <end position="66"/>
    </location>
    <ligand>
        <name>GTP</name>
        <dbReference type="ChEBI" id="CHEBI:37565"/>
    </ligand>
</feature>
<dbReference type="EMBL" id="CP001015">
    <property type="protein sequence ID" value="ACF56839.1"/>
    <property type="molecule type" value="Genomic_DNA"/>
</dbReference>
<dbReference type="SMR" id="B5E6K9"/>
<dbReference type="KEGG" id="spx:SPG_1492"/>
<dbReference type="HOGENOM" id="CLU_059558_0_0_9"/>
<dbReference type="GO" id="GO:0005524">
    <property type="term" value="F:ATP binding"/>
    <property type="evidence" value="ECO:0007669"/>
    <property type="project" value="UniProtKB-UniRule"/>
</dbReference>
<dbReference type="GO" id="GO:0005525">
    <property type="term" value="F:GTP binding"/>
    <property type="evidence" value="ECO:0007669"/>
    <property type="project" value="UniProtKB-UniRule"/>
</dbReference>
<dbReference type="Gene3D" id="3.40.50.300">
    <property type="entry name" value="P-loop containing nucleotide triphosphate hydrolases"/>
    <property type="match status" value="1"/>
</dbReference>
<dbReference type="HAMAP" id="MF_00636">
    <property type="entry name" value="RapZ_like"/>
    <property type="match status" value="1"/>
</dbReference>
<dbReference type="InterPro" id="IPR027417">
    <property type="entry name" value="P-loop_NTPase"/>
</dbReference>
<dbReference type="InterPro" id="IPR005337">
    <property type="entry name" value="RapZ-like"/>
</dbReference>
<dbReference type="InterPro" id="IPR053930">
    <property type="entry name" value="RapZ-like_N"/>
</dbReference>
<dbReference type="InterPro" id="IPR053931">
    <property type="entry name" value="RapZ_C"/>
</dbReference>
<dbReference type="NCBIfam" id="NF003828">
    <property type="entry name" value="PRK05416.1"/>
    <property type="match status" value="1"/>
</dbReference>
<dbReference type="PANTHER" id="PTHR30448">
    <property type="entry name" value="RNASE ADAPTER PROTEIN RAPZ"/>
    <property type="match status" value="1"/>
</dbReference>
<dbReference type="PANTHER" id="PTHR30448:SF0">
    <property type="entry name" value="RNASE ADAPTER PROTEIN RAPZ"/>
    <property type="match status" value="1"/>
</dbReference>
<dbReference type="Pfam" id="PF22740">
    <property type="entry name" value="PapZ_C"/>
    <property type="match status" value="1"/>
</dbReference>
<dbReference type="Pfam" id="PF03668">
    <property type="entry name" value="RapZ-like_N"/>
    <property type="match status" value="1"/>
</dbReference>
<dbReference type="PIRSF" id="PIRSF005052">
    <property type="entry name" value="P-loopkin"/>
    <property type="match status" value="1"/>
</dbReference>
<dbReference type="SUPFAM" id="SSF52540">
    <property type="entry name" value="P-loop containing nucleoside triphosphate hydrolases"/>
    <property type="match status" value="1"/>
</dbReference>
<protein>
    <recommendedName>
        <fullName evidence="1">Nucleotide-binding protein SPG_1492</fullName>
    </recommendedName>
</protein>
<name>Y1492_STRP4</name>
<accession>B5E6K9</accession>
<reference key="1">
    <citation type="journal article" date="2001" name="Microb. Drug Resist.">
        <title>Annotated draft genomic sequence from a Streptococcus pneumoniae type 19F clinical isolate.</title>
        <authorList>
            <person name="Dopazo J."/>
            <person name="Mendoza A."/>
            <person name="Herrero J."/>
            <person name="Caldara F."/>
            <person name="Humbert Y."/>
            <person name="Friedli L."/>
            <person name="Guerrier M."/>
            <person name="Grand-Schenk E."/>
            <person name="Gandin C."/>
            <person name="de Francesco M."/>
            <person name="Polissi A."/>
            <person name="Buell G."/>
            <person name="Feger G."/>
            <person name="Garcia E."/>
            <person name="Peitsch M."/>
            <person name="Garcia-Bustos J.F."/>
        </authorList>
    </citation>
    <scope>NUCLEOTIDE SEQUENCE [LARGE SCALE GENOMIC DNA]</scope>
    <source>
        <strain>G54</strain>
    </source>
</reference>
<reference key="2">
    <citation type="submission" date="2008-03" db="EMBL/GenBank/DDBJ databases">
        <title>Pneumococcal beta glucoside metabolism investigated by whole genome comparison.</title>
        <authorList>
            <person name="Mulas L."/>
            <person name="Trappetti C."/>
            <person name="Hakenbeck R."/>
            <person name="Iannelli F."/>
            <person name="Pozzi G."/>
            <person name="Davidsen T.M."/>
            <person name="Tettelin H."/>
            <person name="Oggioni M."/>
        </authorList>
    </citation>
    <scope>NUCLEOTIDE SEQUENCE [LARGE SCALE GENOMIC DNA]</scope>
    <source>
        <strain>G54</strain>
    </source>
</reference>
<organism>
    <name type="scientific">Streptococcus pneumoniae serotype 19F (strain G54)</name>
    <dbReference type="NCBI Taxonomy" id="512566"/>
    <lineage>
        <taxon>Bacteria</taxon>
        <taxon>Bacillati</taxon>
        <taxon>Bacillota</taxon>
        <taxon>Bacilli</taxon>
        <taxon>Lactobacillales</taxon>
        <taxon>Streptococcaceae</taxon>
        <taxon>Streptococcus</taxon>
    </lineage>
</organism>
<comment type="function">
    <text evidence="1">Displays ATPase and GTPase activities.</text>
</comment>
<comment type="similarity">
    <text evidence="1">Belongs to the RapZ-like family.</text>
</comment>
<proteinExistence type="inferred from homology"/>
<sequence length="296" mass="33795">MTKKQLHLVIVTGMSGAGKTVAIQSFEDLGYFTIDNMPPALLPKFLQLVEIKEDNPKLALVVDMRSRSFFSEIQAVLDELENQDGLDFKILFLDAADKELVARYKETRRSHPLAADGRILDGIKLERELLAPLKNMSQNVVDTTELTPRELRKTLAEQFSDQEQAQSFRIEVMSFGFKYGIPIDADLVFDVRFLPNPYYLPELRNQTGVDEPVYDYVMNHPESEDFYQHLLALIEPILPSYQKEGKSVLTIAMGCTGGQHRSVAFAKRLVQDLSKNWSVNEGHRDKDRRKETVNRS</sequence>
<gene>
    <name type="ordered locus">SPG_1492</name>
</gene>